<feature type="chain" id="PRO_1000022182" description="Valine--tRNA ligase">
    <location>
        <begin position="1"/>
        <end position="812"/>
    </location>
</feature>
<feature type="short sequence motif" description="'HIGH' region">
    <location>
        <begin position="46"/>
        <end position="56"/>
    </location>
</feature>
<feature type="short sequence motif" description="'KMSKS' region">
    <location>
        <begin position="536"/>
        <end position="540"/>
    </location>
</feature>
<feature type="binding site" evidence="1">
    <location>
        <position position="539"/>
    </location>
    <ligand>
        <name>ATP</name>
        <dbReference type="ChEBI" id="CHEBI:30616"/>
    </ligand>
</feature>
<comment type="function">
    <text evidence="1">Catalyzes the attachment of valine to tRNA(Val). As ValRS can inadvertently accommodate and process structurally similar amino acids such as threonine, to avoid such errors, it has a 'posttransfer' editing activity that hydrolyzes mischarged Thr-tRNA(Val) in a tRNA-dependent manner.</text>
</comment>
<comment type="catalytic activity">
    <reaction evidence="1">
        <text>tRNA(Val) + L-valine + ATP = L-valyl-tRNA(Val) + AMP + diphosphate</text>
        <dbReference type="Rhea" id="RHEA:10704"/>
        <dbReference type="Rhea" id="RHEA-COMP:9672"/>
        <dbReference type="Rhea" id="RHEA-COMP:9708"/>
        <dbReference type="ChEBI" id="CHEBI:30616"/>
        <dbReference type="ChEBI" id="CHEBI:33019"/>
        <dbReference type="ChEBI" id="CHEBI:57762"/>
        <dbReference type="ChEBI" id="CHEBI:78442"/>
        <dbReference type="ChEBI" id="CHEBI:78537"/>
        <dbReference type="ChEBI" id="CHEBI:456215"/>
        <dbReference type="EC" id="6.1.1.9"/>
    </reaction>
</comment>
<comment type="subunit">
    <text evidence="1">Monomer.</text>
</comment>
<comment type="subcellular location">
    <subcellularLocation>
        <location evidence="1">Cytoplasm</location>
    </subcellularLocation>
</comment>
<comment type="domain">
    <text evidence="1">ValRS has two distinct active sites: one for aminoacylation and one for editing. The misactivated threonine is translocated from the active site to the editing site.</text>
</comment>
<comment type="similarity">
    <text evidence="1">Belongs to the class-I aminoacyl-tRNA synthetase family. ValS type 2 subfamily.</text>
</comment>
<accession>A8GPJ3</accession>
<reference key="1">
    <citation type="submission" date="2007-09" db="EMBL/GenBank/DDBJ databases">
        <title>Complete genome sequence of Rickettsia akari.</title>
        <authorList>
            <person name="Madan A."/>
            <person name="Fahey J."/>
            <person name="Helton E."/>
            <person name="Ketteman M."/>
            <person name="Madan A."/>
            <person name="Rodrigues S."/>
            <person name="Sanchez A."/>
            <person name="Whiting M."/>
            <person name="Dasch G."/>
            <person name="Eremeeva M."/>
        </authorList>
    </citation>
    <scope>NUCLEOTIDE SEQUENCE [LARGE SCALE GENOMIC DNA]</scope>
    <source>
        <strain>Hartford</strain>
    </source>
</reference>
<evidence type="ECO:0000255" key="1">
    <source>
        <dbReference type="HAMAP-Rule" id="MF_02005"/>
    </source>
</evidence>
<name>SYV_RICAH</name>
<keyword id="KW-0030">Aminoacyl-tRNA synthetase</keyword>
<keyword id="KW-0067">ATP-binding</keyword>
<keyword id="KW-0963">Cytoplasm</keyword>
<keyword id="KW-0436">Ligase</keyword>
<keyword id="KW-0547">Nucleotide-binding</keyword>
<keyword id="KW-0648">Protein biosynthesis</keyword>
<protein>
    <recommendedName>
        <fullName evidence="1">Valine--tRNA ligase</fullName>
        <ecNumber evidence="1">6.1.1.9</ecNumber>
    </recommendedName>
    <alternativeName>
        <fullName evidence="1">Valyl-tRNA synthetase</fullName>
        <shortName evidence="1">ValRS</shortName>
    </alternativeName>
</protein>
<organism>
    <name type="scientific">Rickettsia akari (strain Hartford)</name>
    <dbReference type="NCBI Taxonomy" id="293614"/>
    <lineage>
        <taxon>Bacteria</taxon>
        <taxon>Pseudomonadati</taxon>
        <taxon>Pseudomonadota</taxon>
        <taxon>Alphaproteobacteria</taxon>
        <taxon>Rickettsiales</taxon>
        <taxon>Rickettsiaceae</taxon>
        <taxon>Rickettsieae</taxon>
        <taxon>Rickettsia</taxon>
        <taxon>spotted fever group</taxon>
    </lineage>
</organism>
<dbReference type="EC" id="6.1.1.9" evidence="1"/>
<dbReference type="EMBL" id="CP000847">
    <property type="protein sequence ID" value="ABV75318.1"/>
    <property type="molecule type" value="Genomic_DNA"/>
</dbReference>
<dbReference type="RefSeq" id="WP_012149948.1">
    <property type="nucleotide sequence ID" value="NC_009881.1"/>
</dbReference>
<dbReference type="SMR" id="A8GPJ3"/>
<dbReference type="STRING" id="293614.A1C_05365"/>
<dbReference type="KEGG" id="rak:A1C_05365"/>
<dbReference type="eggNOG" id="COG0525">
    <property type="taxonomic scope" value="Bacteria"/>
</dbReference>
<dbReference type="HOGENOM" id="CLU_001493_0_2_5"/>
<dbReference type="Proteomes" id="UP000006830">
    <property type="component" value="Chromosome"/>
</dbReference>
<dbReference type="GO" id="GO:0005829">
    <property type="term" value="C:cytosol"/>
    <property type="evidence" value="ECO:0007669"/>
    <property type="project" value="TreeGrafter"/>
</dbReference>
<dbReference type="GO" id="GO:0002161">
    <property type="term" value="F:aminoacyl-tRNA deacylase activity"/>
    <property type="evidence" value="ECO:0007669"/>
    <property type="project" value="InterPro"/>
</dbReference>
<dbReference type="GO" id="GO:0005524">
    <property type="term" value="F:ATP binding"/>
    <property type="evidence" value="ECO:0007669"/>
    <property type="project" value="UniProtKB-UniRule"/>
</dbReference>
<dbReference type="GO" id="GO:0004832">
    <property type="term" value="F:valine-tRNA ligase activity"/>
    <property type="evidence" value="ECO:0007669"/>
    <property type="project" value="UniProtKB-UniRule"/>
</dbReference>
<dbReference type="GO" id="GO:0006438">
    <property type="term" value="P:valyl-tRNA aminoacylation"/>
    <property type="evidence" value="ECO:0007669"/>
    <property type="project" value="UniProtKB-UniRule"/>
</dbReference>
<dbReference type="CDD" id="cd07962">
    <property type="entry name" value="Anticodon_Ia_Val"/>
    <property type="match status" value="1"/>
</dbReference>
<dbReference type="FunFam" id="1.10.730.10:FF:000033">
    <property type="entry name" value="Valine--tRNA ligase"/>
    <property type="match status" value="1"/>
</dbReference>
<dbReference type="FunFam" id="3.40.50.620:FF:000192">
    <property type="entry name" value="Valine--tRNA ligase"/>
    <property type="match status" value="1"/>
</dbReference>
<dbReference type="Gene3D" id="3.40.50.620">
    <property type="entry name" value="HUPs"/>
    <property type="match status" value="2"/>
</dbReference>
<dbReference type="Gene3D" id="1.10.730.10">
    <property type="entry name" value="Isoleucyl-tRNA Synthetase, Domain 1"/>
    <property type="match status" value="1"/>
</dbReference>
<dbReference type="HAMAP" id="MF_02005">
    <property type="entry name" value="Val_tRNA_synth_type2"/>
    <property type="match status" value="1"/>
</dbReference>
<dbReference type="InterPro" id="IPR001412">
    <property type="entry name" value="aa-tRNA-synth_I_CS"/>
</dbReference>
<dbReference type="InterPro" id="IPR002300">
    <property type="entry name" value="aa-tRNA-synth_Ia"/>
</dbReference>
<dbReference type="InterPro" id="IPR033705">
    <property type="entry name" value="Anticodon_Ia_Val"/>
</dbReference>
<dbReference type="InterPro" id="IPR013155">
    <property type="entry name" value="M/V/L/I-tRNA-synth_anticd-bd"/>
</dbReference>
<dbReference type="InterPro" id="IPR014729">
    <property type="entry name" value="Rossmann-like_a/b/a_fold"/>
</dbReference>
<dbReference type="InterPro" id="IPR009080">
    <property type="entry name" value="tRNAsynth_Ia_anticodon-bd"/>
</dbReference>
<dbReference type="InterPro" id="IPR009008">
    <property type="entry name" value="Val/Leu/Ile-tRNA-synth_edit"/>
</dbReference>
<dbReference type="InterPro" id="IPR022874">
    <property type="entry name" value="Valine-tRNA_ligase_type_2"/>
</dbReference>
<dbReference type="InterPro" id="IPR002303">
    <property type="entry name" value="Valyl-tRNA_ligase"/>
</dbReference>
<dbReference type="NCBIfam" id="NF009687">
    <property type="entry name" value="PRK13208.1"/>
    <property type="match status" value="1"/>
</dbReference>
<dbReference type="NCBIfam" id="TIGR00422">
    <property type="entry name" value="valS"/>
    <property type="match status" value="1"/>
</dbReference>
<dbReference type="PANTHER" id="PTHR11946:SF93">
    <property type="entry name" value="VALINE--TRNA LIGASE, CHLOROPLASTIC_MITOCHONDRIAL 2"/>
    <property type="match status" value="1"/>
</dbReference>
<dbReference type="PANTHER" id="PTHR11946">
    <property type="entry name" value="VALYL-TRNA SYNTHETASES"/>
    <property type="match status" value="1"/>
</dbReference>
<dbReference type="Pfam" id="PF08264">
    <property type="entry name" value="Anticodon_1"/>
    <property type="match status" value="1"/>
</dbReference>
<dbReference type="Pfam" id="PF00133">
    <property type="entry name" value="tRNA-synt_1"/>
    <property type="match status" value="1"/>
</dbReference>
<dbReference type="PRINTS" id="PR00986">
    <property type="entry name" value="TRNASYNTHVAL"/>
</dbReference>
<dbReference type="SUPFAM" id="SSF47323">
    <property type="entry name" value="Anticodon-binding domain of a subclass of class I aminoacyl-tRNA synthetases"/>
    <property type="match status" value="1"/>
</dbReference>
<dbReference type="SUPFAM" id="SSF52374">
    <property type="entry name" value="Nucleotidylyl transferase"/>
    <property type="match status" value="1"/>
</dbReference>
<dbReference type="SUPFAM" id="SSF50677">
    <property type="entry name" value="ValRS/IleRS/LeuRS editing domain"/>
    <property type="match status" value="1"/>
</dbReference>
<dbReference type="PROSITE" id="PS00178">
    <property type="entry name" value="AA_TRNA_LIGASE_I"/>
    <property type="match status" value="1"/>
</dbReference>
<proteinExistence type="inferred from homology"/>
<gene>
    <name evidence="1" type="primary">valS</name>
    <name type="ordered locus">A1C_05365</name>
</gene>
<sequence length="812" mass="93990">MTEFPKNYNFTENEKKWQQIWQAQQIYAYDPNISKEETYVVDTPPPTVSGQLHIGHVYSYTQTDFIVRFQRMIGKNIFYPMGFDDNGLPTERLVEKQKQIKAYNMGRDEFIKICEEVVESEEEKFRRLFNQIALSVDWSLEYQTISPLSRKISQMSFLDLVKKGKIYRNDQPILWDPVDGTALAQADIEDKAKTSFMNYIIFKTEQGESLTIATTRPELLPACIAVFYHPDDKRYKHLACKSAITPLFNEKVPLLASPLVQQDKGTGLVMCCTFGDQTDITWWKTHNLPLKTIITKKGTINFPHNIAIDGLKIKEARIKIIDILKEQKLITKQEEITQTVKCAERSGAPLEILTVPQWFVKTISHKEALLKRANELNWRPNNMKIRLENWINAISWDWCISRQRYFGVPFPVWYSKRVGEEGKILYADISQLPVDPLKDLPIGYSKEEVEPDLDVMDTWATSSVSPQLSTHCISDNFAVNKDRHNKLFPMDLRPQAHEIIRTWAFYTILKAHLHQNTLPWGNIMVSGWCLAEDRSKMSKSKGNVLVPEKLLEQYGSDVIRYWSANSKLGADTAYSEDVMKNGKRLVNKLWNACKFIFIHCNKLKDVDKKASLFDIKEQITNEFDQWMINKLVELVNAATNELQNYEYANAMHLTEKFFWVIFCDNYLEISKTRSYDEENKNPQGQYSSILTLYHVMQILLKLFAPFIPHITEELYQILYSENSIHVKGNWVNYGDLHYGIDVTQSEGLIAILDIVRKFKAENNLSIKAPIKLLEVSGIELSAELTEDLKNVTSAEEIQFEGQGDKIKVNVIF</sequence>